<name>HFLD_ECOL6</name>
<evidence type="ECO:0000255" key="1">
    <source>
        <dbReference type="HAMAP-Rule" id="MF_00695"/>
    </source>
</evidence>
<evidence type="ECO:0000305" key="2"/>
<keyword id="KW-0997">Cell inner membrane</keyword>
<keyword id="KW-1003">Cell membrane</keyword>
<keyword id="KW-0175">Coiled coil</keyword>
<keyword id="KW-0963">Cytoplasm</keyword>
<keyword id="KW-0472">Membrane</keyword>
<keyword id="KW-1185">Reference proteome</keyword>
<organism>
    <name type="scientific">Escherichia coli O6:H1 (strain CFT073 / ATCC 700928 / UPEC)</name>
    <dbReference type="NCBI Taxonomy" id="199310"/>
    <lineage>
        <taxon>Bacteria</taxon>
        <taxon>Pseudomonadati</taxon>
        <taxon>Pseudomonadota</taxon>
        <taxon>Gammaproteobacteria</taxon>
        <taxon>Enterobacterales</taxon>
        <taxon>Enterobacteriaceae</taxon>
        <taxon>Escherichia</taxon>
    </lineage>
</organism>
<reference key="1">
    <citation type="journal article" date="2002" name="Proc. Natl. Acad. Sci. U.S.A.">
        <title>Extensive mosaic structure revealed by the complete genome sequence of uropathogenic Escherichia coli.</title>
        <authorList>
            <person name="Welch R.A."/>
            <person name="Burland V."/>
            <person name="Plunkett G. III"/>
            <person name="Redford P."/>
            <person name="Roesch P."/>
            <person name="Rasko D."/>
            <person name="Buckles E.L."/>
            <person name="Liou S.-R."/>
            <person name="Boutin A."/>
            <person name="Hackett J."/>
            <person name="Stroud D."/>
            <person name="Mayhew G.F."/>
            <person name="Rose D.J."/>
            <person name="Zhou S."/>
            <person name="Schwartz D.C."/>
            <person name="Perna N.T."/>
            <person name="Mobley H.L.T."/>
            <person name="Donnenberg M.S."/>
            <person name="Blattner F.R."/>
        </authorList>
    </citation>
    <scope>NUCLEOTIDE SEQUENCE [LARGE SCALE GENOMIC DNA]</scope>
    <source>
        <strain>CFT073 / ATCC 700928 / UPEC</strain>
    </source>
</reference>
<sequence>MAKNYYDITLALAGICQSARLVQQLAHQGHCDGDALHVSLNSIIDMNPSSTLAVFGGSEANLRVGLETLLGVLNASSRQGLNAELTRYTLSLMVLERKLSSAKGALDTLGNRINGLQRQLEHFDLQSETLMSAMAAIYVDVISPLGPRIQVTGSPAVLQSPQVQAKVRATLLAGIRAAVLWHQVGGGRLQLMFSRNRLTTQAKQILAHLTPEL</sequence>
<proteinExistence type="inferred from homology"/>
<feature type="chain" id="PRO_0000071577" description="High frequency lysogenization protein HflD">
    <location>
        <begin position="1"/>
        <end position="213"/>
    </location>
</feature>
<feature type="coiled-coil region" evidence="1">
    <location>
        <begin position="79"/>
        <end position="126"/>
    </location>
</feature>
<comment type="function">
    <text evidence="1">Negative regulator of phage lambda lysogenization. Contributes to the degradation of the phage regulatory protein CII. Acts probably by holding CII on the membrane surface, away from the target promoters, but close to the FtsH protease.</text>
</comment>
<comment type="subunit">
    <text evidence="1">Interacts with CII protein from phage lambda.</text>
</comment>
<comment type="subcellular location">
    <subcellularLocation>
        <location>Cytoplasm</location>
    </subcellularLocation>
    <subcellularLocation>
        <location evidence="1">Cell inner membrane</location>
        <topology evidence="1">Peripheral membrane protein</topology>
        <orientation evidence="1">Cytoplasmic side</orientation>
    </subcellularLocation>
</comment>
<comment type="similarity">
    <text evidence="1">Belongs to the HflD family.</text>
</comment>
<comment type="sequence caution" evidence="2">
    <conflict type="erroneous initiation">
        <sequence resource="EMBL-CDS" id="AAN79980"/>
    </conflict>
</comment>
<dbReference type="EMBL" id="AE014075">
    <property type="protein sequence ID" value="AAN79980.1"/>
    <property type="status" value="ALT_INIT"/>
    <property type="molecule type" value="Genomic_DNA"/>
</dbReference>
<dbReference type="RefSeq" id="WP_001295971.1">
    <property type="nucleotide sequence ID" value="NZ_CP051263.1"/>
</dbReference>
<dbReference type="SMR" id="Q8FIB7"/>
<dbReference type="STRING" id="199310.c1511"/>
<dbReference type="KEGG" id="ecc:c1511"/>
<dbReference type="eggNOG" id="COG2915">
    <property type="taxonomic scope" value="Bacteria"/>
</dbReference>
<dbReference type="HOGENOM" id="CLU_098920_0_0_6"/>
<dbReference type="Proteomes" id="UP000001410">
    <property type="component" value="Chromosome"/>
</dbReference>
<dbReference type="GO" id="GO:0005737">
    <property type="term" value="C:cytoplasm"/>
    <property type="evidence" value="ECO:0007669"/>
    <property type="project" value="UniProtKB-SubCell"/>
</dbReference>
<dbReference type="GO" id="GO:0005886">
    <property type="term" value="C:plasma membrane"/>
    <property type="evidence" value="ECO:0007669"/>
    <property type="project" value="UniProtKB-SubCell"/>
</dbReference>
<dbReference type="FunFam" id="1.10.3890.10:FF:000001">
    <property type="entry name" value="High frequency lysogenization protein HflD homolog"/>
    <property type="match status" value="1"/>
</dbReference>
<dbReference type="Gene3D" id="1.10.3890.10">
    <property type="entry name" value="HflD-like"/>
    <property type="match status" value="1"/>
</dbReference>
<dbReference type="HAMAP" id="MF_00695">
    <property type="entry name" value="HflD_protein"/>
    <property type="match status" value="1"/>
</dbReference>
<dbReference type="InterPro" id="IPR007451">
    <property type="entry name" value="HflD"/>
</dbReference>
<dbReference type="InterPro" id="IPR035932">
    <property type="entry name" value="HflD-like_sf"/>
</dbReference>
<dbReference type="NCBIfam" id="NF001245">
    <property type="entry name" value="PRK00218.1-1"/>
    <property type="match status" value="1"/>
</dbReference>
<dbReference type="NCBIfam" id="NF001246">
    <property type="entry name" value="PRK00218.1-2"/>
    <property type="match status" value="1"/>
</dbReference>
<dbReference type="NCBIfam" id="NF001248">
    <property type="entry name" value="PRK00218.1-4"/>
    <property type="match status" value="1"/>
</dbReference>
<dbReference type="NCBIfam" id="NF001249">
    <property type="entry name" value="PRK00218.1-5"/>
    <property type="match status" value="1"/>
</dbReference>
<dbReference type="PANTHER" id="PTHR38100">
    <property type="entry name" value="HIGH FREQUENCY LYSOGENIZATION PROTEIN HFLD"/>
    <property type="match status" value="1"/>
</dbReference>
<dbReference type="PANTHER" id="PTHR38100:SF1">
    <property type="entry name" value="HIGH FREQUENCY LYSOGENIZATION PROTEIN HFLD"/>
    <property type="match status" value="1"/>
</dbReference>
<dbReference type="Pfam" id="PF04356">
    <property type="entry name" value="DUF489"/>
    <property type="match status" value="1"/>
</dbReference>
<dbReference type="SUPFAM" id="SSF101322">
    <property type="entry name" value="YcfC-like"/>
    <property type="match status" value="1"/>
</dbReference>
<accession>Q8FIB7</accession>
<protein>
    <recommendedName>
        <fullName evidence="1">High frequency lysogenization protein HflD</fullName>
    </recommendedName>
</protein>
<gene>
    <name evidence="1" type="primary">hflD</name>
    <name type="ordered locus">c1511</name>
</gene>